<sequence length="204" mass="23496">MEKTKLKIILLGDSGVGKTSLLKRYNDKDFKQLHNSTIYVDLVTKEICIAERQVILQIWDTAGQERFKSLPSRFYRDTDCCVLVYDVNTLKTFESIDNWHDEFIKQANPETPTKFPFVLMGNKTDVNNGKPRVVAKEIADQWCGSKGNIVYFETSAKAKINVEEAFLEIAKKALTNERQIDDMERYRSVVPTIEKETPRSRCSC</sequence>
<dbReference type="EMBL" id="AB071853">
    <property type="protein sequence ID" value="BAB68378.1"/>
    <property type="molecule type" value="mRNA"/>
</dbReference>
<dbReference type="EMBL" id="AB012243">
    <property type="protein sequence ID" value="BAB08894.1"/>
    <property type="status" value="ALT_SEQ"/>
    <property type="molecule type" value="Genomic_DNA"/>
</dbReference>
<dbReference type="EMBL" id="CP002688">
    <property type="protein sequence ID" value="AED94455.1"/>
    <property type="molecule type" value="Genomic_DNA"/>
</dbReference>
<dbReference type="RefSeq" id="NP_568566.1">
    <property type="nucleotide sequence ID" value="NM_123324.1"/>
</dbReference>
<dbReference type="SMR" id="Q948K6"/>
<dbReference type="FunCoup" id="Q948K6">
    <property type="interactions" value="3"/>
</dbReference>
<dbReference type="STRING" id="3702.Q948K6"/>
<dbReference type="SwissPalm" id="Q948K6"/>
<dbReference type="PaxDb" id="3702-AT5G39620.1"/>
<dbReference type="ProteomicsDB" id="236388"/>
<dbReference type="EnsemblPlants" id="AT5G39620.1">
    <property type="protein sequence ID" value="AT5G39620.1"/>
    <property type="gene ID" value="AT5G39620"/>
</dbReference>
<dbReference type="GeneID" id="833958"/>
<dbReference type="Gramene" id="AT5G39620.1">
    <property type="protein sequence ID" value="AT5G39620.1"/>
    <property type="gene ID" value="AT5G39620"/>
</dbReference>
<dbReference type="KEGG" id="ath:AT5G39620"/>
<dbReference type="Araport" id="AT5G39620"/>
<dbReference type="TAIR" id="AT5G39620">
    <property type="gene designation" value="RABG1"/>
</dbReference>
<dbReference type="eggNOG" id="KOG0394">
    <property type="taxonomic scope" value="Eukaryota"/>
</dbReference>
<dbReference type="HOGENOM" id="CLU_041217_10_6_1"/>
<dbReference type="InParanoid" id="Q948K6"/>
<dbReference type="OMA" id="KEICIAE"/>
<dbReference type="PhylomeDB" id="Q948K6"/>
<dbReference type="PRO" id="PR:Q948K6"/>
<dbReference type="Proteomes" id="UP000006548">
    <property type="component" value="Chromosome 5"/>
</dbReference>
<dbReference type="ExpressionAtlas" id="Q948K6">
    <property type="expression patterns" value="baseline and differential"/>
</dbReference>
<dbReference type="GO" id="GO:0005886">
    <property type="term" value="C:plasma membrane"/>
    <property type="evidence" value="ECO:0007669"/>
    <property type="project" value="UniProtKB-SubCell"/>
</dbReference>
<dbReference type="GO" id="GO:0005525">
    <property type="term" value="F:GTP binding"/>
    <property type="evidence" value="ECO:0007669"/>
    <property type="project" value="UniProtKB-KW"/>
</dbReference>
<dbReference type="GO" id="GO:0003924">
    <property type="term" value="F:GTPase activity"/>
    <property type="evidence" value="ECO:0007669"/>
    <property type="project" value="InterPro"/>
</dbReference>
<dbReference type="GO" id="GO:0015031">
    <property type="term" value="P:protein transport"/>
    <property type="evidence" value="ECO:0007669"/>
    <property type="project" value="UniProtKB-KW"/>
</dbReference>
<dbReference type="FunFam" id="3.40.50.300:FF:002897">
    <property type="entry name" value="Small GTP binding protein Rab7 putative"/>
    <property type="match status" value="1"/>
</dbReference>
<dbReference type="Gene3D" id="3.40.50.300">
    <property type="entry name" value="P-loop containing nucleotide triphosphate hydrolases"/>
    <property type="match status" value="1"/>
</dbReference>
<dbReference type="InterPro" id="IPR027417">
    <property type="entry name" value="P-loop_NTPase"/>
</dbReference>
<dbReference type="InterPro" id="IPR005225">
    <property type="entry name" value="Small_GTP-bd"/>
</dbReference>
<dbReference type="InterPro" id="IPR001806">
    <property type="entry name" value="Small_GTPase"/>
</dbReference>
<dbReference type="NCBIfam" id="TIGR00231">
    <property type="entry name" value="small_GTP"/>
    <property type="match status" value="1"/>
</dbReference>
<dbReference type="PANTHER" id="PTHR47981">
    <property type="entry name" value="RAB FAMILY"/>
    <property type="match status" value="1"/>
</dbReference>
<dbReference type="PANTHER" id="PTHR47981:SF36">
    <property type="entry name" value="RAS-RELATED PROTEIN RABG1-RELATED"/>
    <property type="match status" value="1"/>
</dbReference>
<dbReference type="Pfam" id="PF00071">
    <property type="entry name" value="Ras"/>
    <property type="match status" value="1"/>
</dbReference>
<dbReference type="PRINTS" id="PR00449">
    <property type="entry name" value="RASTRNSFRMNG"/>
</dbReference>
<dbReference type="SMART" id="SM00175">
    <property type="entry name" value="RAB"/>
    <property type="match status" value="1"/>
</dbReference>
<dbReference type="SMART" id="SM00176">
    <property type="entry name" value="RAN"/>
    <property type="match status" value="1"/>
</dbReference>
<dbReference type="SMART" id="SM00173">
    <property type="entry name" value="RAS"/>
    <property type="match status" value="1"/>
</dbReference>
<dbReference type="SMART" id="SM00174">
    <property type="entry name" value="RHO"/>
    <property type="match status" value="1"/>
</dbReference>
<dbReference type="SUPFAM" id="SSF52540">
    <property type="entry name" value="P-loop containing nucleoside triphosphate hydrolases"/>
    <property type="match status" value="1"/>
</dbReference>
<dbReference type="PROSITE" id="PS51419">
    <property type="entry name" value="RAB"/>
    <property type="match status" value="1"/>
</dbReference>
<comment type="function">
    <text evidence="1">Intracellular vesicle trafficking and protein transport.</text>
</comment>
<comment type="subcellular location">
    <subcellularLocation>
        <location evidence="2">Cell membrane</location>
        <topology evidence="2">Lipid-anchor</topology>
        <orientation evidence="2">Cytoplasmic side</orientation>
    </subcellularLocation>
</comment>
<comment type="similarity">
    <text evidence="2">Belongs to the small GTPase superfamily. Rab family.</text>
</comment>
<comment type="sequence caution" evidence="2">
    <conflict type="erroneous gene model prediction">
        <sequence resource="EMBL-CDS" id="BAB08894"/>
    </conflict>
</comment>
<name>RABG1_ARATH</name>
<accession>Q948K6</accession>
<accession>Q9FK99</accession>
<protein>
    <recommendedName>
        <fullName>Ras-related protein RABG1</fullName>
        <shortName>AtRABG1</shortName>
    </recommendedName>
    <alternativeName>
        <fullName>Ras-related protein Rab78</fullName>
        <shortName>AtRab78</shortName>
    </alternativeName>
</protein>
<reference key="1">
    <citation type="submission" date="2001-09" db="EMBL/GenBank/DDBJ databases">
        <title>Rab7 homologs in Arabidopsis thaliana.</title>
        <authorList>
            <person name="Ueda T."/>
            <person name="Wada Y."/>
            <person name="Nakano A."/>
        </authorList>
    </citation>
    <scope>NUCLEOTIDE SEQUENCE [MRNA]</scope>
</reference>
<reference key="2">
    <citation type="journal article" date="1998" name="DNA Res.">
        <title>Structural analysis of Arabidopsis thaliana chromosome 5. VI. Sequence features of the regions of 1,367,185 bp covered by 19 physically assigned P1 and TAC clones.</title>
        <authorList>
            <person name="Kotani H."/>
            <person name="Nakamura Y."/>
            <person name="Sato S."/>
            <person name="Asamizu E."/>
            <person name="Kaneko T."/>
            <person name="Miyajima N."/>
            <person name="Tabata S."/>
        </authorList>
    </citation>
    <scope>NUCLEOTIDE SEQUENCE [LARGE SCALE GENOMIC DNA]</scope>
    <source>
        <strain>cv. Columbia</strain>
    </source>
</reference>
<reference key="3">
    <citation type="journal article" date="2017" name="Plant J.">
        <title>Araport11: a complete reannotation of the Arabidopsis thaliana reference genome.</title>
        <authorList>
            <person name="Cheng C.Y."/>
            <person name="Krishnakumar V."/>
            <person name="Chan A.P."/>
            <person name="Thibaud-Nissen F."/>
            <person name="Schobel S."/>
            <person name="Town C.D."/>
        </authorList>
    </citation>
    <scope>GENOME REANNOTATION</scope>
    <source>
        <strain>cv. Columbia</strain>
    </source>
</reference>
<reference key="4">
    <citation type="journal article" date="2003" name="Plant Physiol.">
        <title>Analysis of the small GTPase gene superfamily of Arabidopsis.</title>
        <authorList>
            <person name="Vernoud V."/>
            <person name="Horton A.C."/>
            <person name="Yang Z."/>
            <person name="Nielsen E."/>
        </authorList>
    </citation>
    <scope>GENE FAMILY</scope>
    <scope>NOMENCLATURE</scope>
</reference>
<keyword id="KW-1003">Cell membrane</keyword>
<keyword id="KW-0342">GTP-binding</keyword>
<keyword id="KW-0449">Lipoprotein</keyword>
<keyword id="KW-0472">Membrane</keyword>
<keyword id="KW-0488">Methylation</keyword>
<keyword id="KW-0547">Nucleotide-binding</keyword>
<keyword id="KW-0636">Prenylation</keyword>
<keyword id="KW-0653">Protein transport</keyword>
<keyword id="KW-1185">Reference proteome</keyword>
<keyword id="KW-0813">Transport</keyword>
<organism>
    <name type="scientific">Arabidopsis thaliana</name>
    <name type="common">Mouse-ear cress</name>
    <dbReference type="NCBI Taxonomy" id="3702"/>
    <lineage>
        <taxon>Eukaryota</taxon>
        <taxon>Viridiplantae</taxon>
        <taxon>Streptophyta</taxon>
        <taxon>Embryophyta</taxon>
        <taxon>Tracheophyta</taxon>
        <taxon>Spermatophyta</taxon>
        <taxon>Magnoliopsida</taxon>
        <taxon>eudicotyledons</taxon>
        <taxon>Gunneridae</taxon>
        <taxon>Pentapetalae</taxon>
        <taxon>rosids</taxon>
        <taxon>malvids</taxon>
        <taxon>Brassicales</taxon>
        <taxon>Brassicaceae</taxon>
        <taxon>Camelineae</taxon>
        <taxon>Arabidopsis</taxon>
    </lineage>
</organism>
<feature type="chain" id="PRO_0000407360" description="Ras-related protein RABG1">
    <location>
        <begin position="1"/>
        <end position="204"/>
    </location>
</feature>
<feature type="short sequence motif" description="Effector region" evidence="1">
    <location>
        <begin position="34"/>
        <end position="42"/>
    </location>
</feature>
<feature type="binding site" evidence="1">
    <location>
        <begin position="12"/>
        <end position="19"/>
    </location>
    <ligand>
        <name>GTP</name>
        <dbReference type="ChEBI" id="CHEBI:37565"/>
    </ligand>
</feature>
<feature type="binding site" evidence="1">
    <location>
        <begin position="60"/>
        <end position="64"/>
    </location>
    <ligand>
        <name>GTP</name>
        <dbReference type="ChEBI" id="CHEBI:37565"/>
    </ligand>
</feature>
<feature type="binding site" evidence="1">
    <location>
        <begin position="122"/>
        <end position="125"/>
    </location>
    <ligand>
        <name>GTP</name>
        <dbReference type="ChEBI" id="CHEBI:37565"/>
    </ligand>
</feature>
<feature type="binding site" evidence="1">
    <location>
        <begin position="155"/>
        <end position="156"/>
    </location>
    <ligand>
        <name>GTP</name>
        <dbReference type="ChEBI" id="CHEBI:37565"/>
    </ligand>
</feature>
<feature type="modified residue" description="Cysteine methyl ester" evidence="1">
    <location>
        <position position="204"/>
    </location>
</feature>
<feature type="lipid moiety-binding region" description="S-geranylgeranyl cysteine" evidence="1">
    <location>
        <position position="202"/>
    </location>
</feature>
<feature type="lipid moiety-binding region" description="S-geranylgeranyl cysteine" evidence="1">
    <location>
        <position position="204"/>
    </location>
</feature>
<proteinExistence type="evidence at transcript level"/>
<gene>
    <name type="primary">RABG1</name>
    <name type="synonym">RAB78</name>
    <name type="ordered locus">At5g39620</name>
    <name type="ORF">MIJ24.90</name>
</gene>
<evidence type="ECO:0000250" key="1"/>
<evidence type="ECO:0000305" key="2"/>